<comment type="function">
    <text evidence="1">Part of a specialized transcription system that mediates the transcription of most ribosomal proteins through the 5'-TCT-3' motif which is a core promoter element at these genes. Seems to also mediate the transcription of NF1. Does not bind the TATA box (By similarity).</text>
</comment>
<comment type="subunit">
    <text evidence="1">Binds TFIIA and TFIIB.</text>
</comment>
<comment type="subcellular location">
    <subcellularLocation>
        <location evidence="1">Cytoplasm</location>
    </subcellularLocation>
    <subcellularLocation>
        <location evidence="1">Nucleus</location>
    </subcellularLocation>
</comment>
<comment type="tissue specificity">
    <text>Present in the brain, heart, liver and gizzard.</text>
</comment>
<comment type="similarity">
    <text evidence="2">Belongs to the TBP family.</text>
</comment>
<protein>
    <recommendedName>
        <fullName>TATA box-binding protein-like 1</fullName>
        <shortName>TBP-like 1</shortName>
    </recommendedName>
    <alternativeName>
        <fullName>TBP-like factor</fullName>
    </alternativeName>
</protein>
<dbReference type="EMBL" id="AB024489">
    <property type="protein sequence ID" value="BAA75886.1"/>
    <property type="molecule type" value="mRNA"/>
</dbReference>
<dbReference type="RefSeq" id="NP_990086.1">
    <property type="nucleotide sequence ID" value="NM_204755.1"/>
</dbReference>
<dbReference type="RefSeq" id="XP_015139496.1">
    <property type="nucleotide sequence ID" value="XM_015284010.4"/>
</dbReference>
<dbReference type="RefSeq" id="XP_015139497.1">
    <property type="nucleotide sequence ID" value="XM_015284011.4"/>
</dbReference>
<dbReference type="RefSeq" id="XP_015139498.1">
    <property type="nucleotide sequence ID" value="XM_015284012.4"/>
</dbReference>
<dbReference type="RefSeq" id="XP_040552697.1">
    <property type="nucleotide sequence ID" value="XM_040696763.2"/>
</dbReference>
<dbReference type="RefSeq" id="XP_046768947.1">
    <property type="nucleotide sequence ID" value="XM_046912991.1"/>
</dbReference>
<dbReference type="RefSeq" id="XP_046768948.1">
    <property type="nucleotide sequence ID" value="XM_046912992.1"/>
</dbReference>
<dbReference type="RefSeq" id="XP_046768950.1">
    <property type="nucleotide sequence ID" value="XM_046912994.1"/>
</dbReference>
<dbReference type="RefSeq" id="XP_046768951.1">
    <property type="nucleotide sequence ID" value="XM_046912995.1"/>
</dbReference>
<dbReference type="RefSeq" id="XP_046768952.1">
    <property type="nucleotide sequence ID" value="XM_046912996.1"/>
</dbReference>
<dbReference type="RefSeq" id="XP_046768953.1">
    <property type="nucleotide sequence ID" value="XM_046912997.1"/>
</dbReference>
<dbReference type="RefSeq" id="XP_046794378.1">
    <property type="nucleotide sequence ID" value="XM_046938422.1"/>
</dbReference>
<dbReference type="SMR" id="Q9YGV8"/>
<dbReference type="FunCoup" id="Q9YGV8">
    <property type="interactions" value="822"/>
</dbReference>
<dbReference type="STRING" id="9031.ENSGALP00000055961"/>
<dbReference type="PaxDb" id="9031-ENSGALP00000022616"/>
<dbReference type="Ensembl" id="ENSGALT00010014701.1">
    <property type="protein sequence ID" value="ENSGALP00010008656.1"/>
    <property type="gene ID" value="ENSGALG00010006173.1"/>
</dbReference>
<dbReference type="GeneID" id="395517"/>
<dbReference type="KEGG" id="gga:395517"/>
<dbReference type="CTD" id="9519"/>
<dbReference type="VEuPathDB" id="HostDB:geneid_395517"/>
<dbReference type="eggNOG" id="KOG3302">
    <property type="taxonomic scope" value="Eukaryota"/>
</dbReference>
<dbReference type="GeneTree" id="ENSGT00940000155712"/>
<dbReference type="HOGENOM" id="CLU_060161_4_1_1"/>
<dbReference type="InParanoid" id="Q9YGV8"/>
<dbReference type="OMA" id="NCEYEPE"/>
<dbReference type="OrthoDB" id="2127950at2759"/>
<dbReference type="PhylomeDB" id="Q9YGV8"/>
<dbReference type="TreeFam" id="TF300102"/>
<dbReference type="PRO" id="PR:Q9YGV8"/>
<dbReference type="Proteomes" id="UP000000539">
    <property type="component" value="Chromosome 3"/>
</dbReference>
<dbReference type="Bgee" id="ENSGALG00000013981">
    <property type="expression patterns" value="Expressed in spermatid and 14 other cell types or tissues"/>
</dbReference>
<dbReference type="GO" id="GO:0005737">
    <property type="term" value="C:cytoplasm"/>
    <property type="evidence" value="ECO:0007669"/>
    <property type="project" value="UniProtKB-SubCell"/>
</dbReference>
<dbReference type="GO" id="GO:0001673">
    <property type="term" value="C:male germ cell nucleus"/>
    <property type="evidence" value="ECO:0007669"/>
    <property type="project" value="Ensembl"/>
</dbReference>
<dbReference type="GO" id="GO:0005672">
    <property type="term" value="C:transcription factor TFIIA complex"/>
    <property type="evidence" value="ECO:0007669"/>
    <property type="project" value="Ensembl"/>
</dbReference>
<dbReference type="GO" id="GO:0140223">
    <property type="term" value="F:general transcription initiation factor activity"/>
    <property type="evidence" value="ECO:0000318"/>
    <property type="project" value="GO_Central"/>
</dbReference>
<dbReference type="GO" id="GO:0000979">
    <property type="term" value="F:RNA polymerase II core promoter sequence-specific DNA binding"/>
    <property type="evidence" value="ECO:0007669"/>
    <property type="project" value="Ensembl"/>
</dbReference>
<dbReference type="GO" id="GO:0016251">
    <property type="term" value="F:RNA polymerase II general transcription initiation factor activity"/>
    <property type="evidence" value="ECO:0007669"/>
    <property type="project" value="Ensembl"/>
</dbReference>
<dbReference type="GO" id="GO:0001675">
    <property type="term" value="P:acrosome assembly"/>
    <property type="evidence" value="ECO:0007669"/>
    <property type="project" value="Ensembl"/>
</dbReference>
<dbReference type="GO" id="GO:0006352">
    <property type="term" value="P:DNA-templated transcription initiation"/>
    <property type="evidence" value="ECO:0000318"/>
    <property type="project" value="GO_Central"/>
</dbReference>
<dbReference type="GO" id="GO:0006235">
    <property type="term" value="P:dTTP biosynthetic process"/>
    <property type="evidence" value="ECO:0007669"/>
    <property type="project" value="Ensembl"/>
</dbReference>
<dbReference type="GO" id="GO:0007289">
    <property type="term" value="P:spermatid nucleus differentiation"/>
    <property type="evidence" value="ECO:0007669"/>
    <property type="project" value="Ensembl"/>
</dbReference>
<dbReference type="CDD" id="cd04517">
    <property type="entry name" value="TLF"/>
    <property type="match status" value="1"/>
</dbReference>
<dbReference type="FunFam" id="3.30.310.10:FF:000005">
    <property type="entry name" value="TATA box-binding protein-like 1"/>
    <property type="match status" value="1"/>
</dbReference>
<dbReference type="FunFam" id="3.30.310.10:FF:000009">
    <property type="entry name" value="TatA box-binding protein-like protein 1"/>
    <property type="match status" value="1"/>
</dbReference>
<dbReference type="Gene3D" id="3.30.310.10">
    <property type="entry name" value="TATA-Binding Protein"/>
    <property type="match status" value="2"/>
</dbReference>
<dbReference type="InterPro" id="IPR000814">
    <property type="entry name" value="TBP"/>
</dbReference>
<dbReference type="InterPro" id="IPR015445">
    <property type="entry name" value="TBP-like"/>
</dbReference>
<dbReference type="InterPro" id="IPR012295">
    <property type="entry name" value="TBP_dom_sf"/>
</dbReference>
<dbReference type="PANTHER" id="PTHR10126">
    <property type="entry name" value="TATA-BOX BINDING PROTEIN"/>
    <property type="match status" value="1"/>
</dbReference>
<dbReference type="Pfam" id="PF00352">
    <property type="entry name" value="TBP"/>
    <property type="match status" value="2"/>
</dbReference>
<dbReference type="PRINTS" id="PR00686">
    <property type="entry name" value="TIFACTORIID"/>
</dbReference>
<dbReference type="SUPFAM" id="SSF55945">
    <property type="entry name" value="TATA-box binding protein-like"/>
    <property type="match status" value="2"/>
</dbReference>
<accession>Q9YGV8</accession>
<evidence type="ECO:0000250" key="1"/>
<evidence type="ECO:0000305" key="2"/>
<reference key="1">
    <citation type="journal article" date="1999" name="Nucleic Acids Res.">
        <title>Analysis of the chicken TBP-like protein (tlp) gene: evidence for a striking conservation of vertebrate TLPs and for a close relationship between vertebrate tbp and tlp genes.</title>
        <authorList>
            <person name="Shimada M."/>
            <person name="Ohbayashi T."/>
            <person name="Ishida M."/>
            <person name="Nakadai T."/>
            <person name="Makino Y."/>
            <person name="Aoki T."/>
            <person name="Kawata T."/>
            <person name="Suzuki T."/>
            <person name="Matsuda Y."/>
            <person name="Tamura T.-A."/>
        </authorList>
    </citation>
    <scope>NUCLEOTIDE SEQUENCE [MRNA]</scope>
    <source>
        <tissue>B-cell</tissue>
    </source>
</reference>
<keyword id="KW-0963">Cytoplasm</keyword>
<keyword id="KW-0238">DNA-binding</keyword>
<keyword id="KW-0539">Nucleus</keyword>
<keyword id="KW-1185">Reference proteome</keyword>
<keyword id="KW-0804">Transcription</keyword>
<keyword id="KW-0805">Transcription regulation</keyword>
<gene>
    <name type="primary">TBPL1</name>
    <name type="synonym">TBP</name>
</gene>
<proteinExistence type="evidence at transcript level"/>
<sequence>MDADSDVALDILITNVVCVFRTRCHLNLRKIALEGANVIYKRDVGKVLMKLRKPRITATIWSSGKVICTGATSEEEAKFGARRLARCLQKLGFQVIFTDFKVVNVLAVCNMPFEIRLPEFTKNNRPHASYEPELHPAVCYRIKTLRATLQIFSTGSITVTGPNVKAVASAVEQIYPFVFESRK</sequence>
<name>TBPL1_CHICK</name>
<organism>
    <name type="scientific">Gallus gallus</name>
    <name type="common">Chicken</name>
    <dbReference type="NCBI Taxonomy" id="9031"/>
    <lineage>
        <taxon>Eukaryota</taxon>
        <taxon>Metazoa</taxon>
        <taxon>Chordata</taxon>
        <taxon>Craniata</taxon>
        <taxon>Vertebrata</taxon>
        <taxon>Euteleostomi</taxon>
        <taxon>Archelosauria</taxon>
        <taxon>Archosauria</taxon>
        <taxon>Dinosauria</taxon>
        <taxon>Saurischia</taxon>
        <taxon>Theropoda</taxon>
        <taxon>Coelurosauria</taxon>
        <taxon>Aves</taxon>
        <taxon>Neognathae</taxon>
        <taxon>Galloanserae</taxon>
        <taxon>Galliformes</taxon>
        <taxon>Phasianidae</taxon>
        <taxon>Phasianinae</taxon>
        <taxon>Gallus</taxon>
    </lineage>
</organism>
<feature type="chain" id="PRO_0000153994" description="TATA box-binding protein-like 1">
    <location>
        <begin position="1"/>
        <end position="183"/>
    </location>
</feature>